<comment type="function">
    <text evidence="1">Binds directly to 23S rRNA. The L1 stalk is quite mobile in the ribosome, and is involved in E site tRNA release.</text>
</comment>
<comment type="function">
    <text evidence="1">Protein L1 is also a translational repressor protein, it controls the translation of the L11 operon by binding to its mRNA.</text>
</comment>
<comment type="subunit">
    <text evidence="1">Part of the 50S ribosomal subunit.</text>
</comment>
<comment type="similarity">
    <text evidence="1">Belongs to the universal ribosomal protein uL1 family.</text>
</comment>
<reference key="1">
    <citation type="journal article" date="2007" name="Proc. Natl. Acad. Sci. U.S.A.">
        <title>Genome sequencing reveals complex secondary metabolome in the marine actinomycete Salinispora tropica.</title>
        <authorList>
            <person name="Udwary D.W."/>
            <person name="Zeigler L."/>
            <person name="Asolkar R.N."/>
            <person name="Singan V."/>
            <person name="Lapidus A."/>
            <person name="Fenical W."/>
            <person name="Jensen P.R."/>
            <person name="Moore B.S."/>
        </authorList>
    </citation>
    <scope>NUCLEOTIDE SEQUENCE [LARGE SCALE GENOMIC DNA]</scope>
    <source>
        <strain>ATCC BAA-916 / DSM 44818 / JCM 13857 / NBRC 105044 / CNB-440</strain>
    </source>
</reference>
<gene>
    <name evidence="1" type="primary">rplA</name>
    <name type="ordered locus">Strop_3936</name>
</gene>
<dbReference type="EMBL" id="CP000667">
    <property type="protein sequence ID" value="ABP56366.1"/>
    <property type="molecule type" value="Genomic_DNA"/>
</dbReference>
<dbReference type="RefSeq" id="WP_012015136.1">
    <property type="nucleotide sequence ID" value="NC_009380.1"/>
</dbReference>
<dbReference type="SMR" id="A4XBQ9"/>
<dbReference type="STRING" id="369723.Strop_3936"/>
<dbReference type="KEGG" id="stp:Strop_3936"/>
<dbReference type="PATRIC" id="fig|369723.5.peg.4062"/>
<dbReference type="eggNOG" id="COG0081">
    <property type="taxonomic scope" value="Bacteria"/>
</dbReference>
<dbReference type="HOGENOM" id="CLU_062853_0_0_11"/>
<dbReference type="Proteomes" id="UP000000235">
    <property type="component" value="Chromosome"/>
</dbReference>
<dbReference type="GO" id="GO:0015934">
    <property type="term" value="C:large ribosomal subunit"/>
    <property type="evidence" value="ECO:0007669"/>
    <property type="project" value="InterPro"/>
</dbReference>
<dbReference type="GO" id="GO:0019843">
    <property type="term" value="F:rRNA binding"/>
    <property type="evidence" value="ECO:0007669"/>
    <property type="project" value="UniProtKB-UniRule"/>
</dbReference>
<dbReference type="GO" id="GO:0003735">
    <property type="term" value="F:structural constituent of ribosome"/>
    <property type="evidence" value="ECO:0007669"/>
    <property type="project" value="InterPro"/>
</dbReference>
<dbReference type="GO" id="GO:0000049">
    <property type="term" value="F:tRNA binding"/>
    <property type="evidence" value="ECO:0007669"/>
    <property type="project" value="UniProtKB-KW"/>
</dbReference>
<dbReference type="GO" id="GO:0006417">
    <property type="term" value="P:regulation of translation"/>
    <property type="evidence" value="ECO:0007669"/>
    <property type="project" value="UniProtKB-KW"/>
</dbReference>
<dbReference type="GO" id="GO:0006412">
    <property type="term" value="P:translation"/>
    <property type="evidence" value="ECO:0007669"/>
    <property type="project" value="UniProtKB-UniRule"/>
</dbReference>
<dbReference type="CDD" id="cd00403">
    <property type="entry name" value="Ribosomal_L1"/>
    <property type="match status" value="1"/>
</dbReference>
<dbReference type="FunFam" id="3.40.50.790:FF:000001">
    <property type="entry name" value="50S ribosomal protein L1"/>
    <property type="match status" value="1"/>
</dbReference>
<dbReference type="Gene3D" id="3.30.190.20">
    <property type="match status" value="1"/>
</dbReference>
<dbReference type="Gene3D" id="3.40.50.790">
    <property type="match status" value="1"/>
</dbReference>
<dbReference type="HAMAP" id="MF_01318_B">
    <property type="entry name" value="Ribosomal_uL1_B"/>
    <property type="match status" value="1"/>
</dbReference>
<dbReference type="InterPro" id="IPR005878">
    <property type="entry name" value="Ribosom_uL1_bac-type"/>
</dbReference>
<dbReference type="InterPro" id="IPR002143">
    <property type="entry name" value="Ribosomal_uL1"/>
</dbReference>
<dbReference type="InterPro" id="IPR023674">
    <property type="entry name" value="Ribosomal_uL1-like"/>
</dbReference>
<dbReference type="InterPro" id="IPR028364">
    <property type="entry name" value="Ribosomal_uL1/biogenesis"/>
</dbReference>
<dbReference type="InterPro" id="IPR016095">
    <property type="entry name" value="Ribosomal_uL1_3-a/b-sand"/>
</dbReference>
<dbReference type="InterPro" id="IPR023673">
    <property type="entry name" value="Ribosomal_uL1_CS"/>
</dbReference>
<dbReference type="NCBIfam" id="TIGR01169">
    <property type="entry name" value="rplA_bact"/>
    <property type="match status" value="1"/>
</dbReference>
<dbReference type="PANTHER" id="PTHR36427">
    <property type="entry name" value="54S RIBOSOMAL PROTEIN L1, MITOCHONDRIAL"/>
    <property type="match status" value="1"/>
</dbReference>
<dbReference type="PANTHER" id="PTHR36427:SF3">
    <property type="entry name" value="LARGE RIBOSOMAL SUBUNIT PROTEIN UL1M"/>
    <property type="match status" value="1"/>
</dbReference>
<dbReference type="Pfam" id="PF00687">
    <property type="entry name" value="Ribosomal_L1"/>
    <property type="match status" value="1"/>
</dbReference>
<dbReference type="PIRSF" id="PIRSF002155">
    <property type="entry name" value="Ribosomal_L1"/>
    <property type="match status" value="1"/>
</dbReference>
<dbReference type="SUPFAM" id="SSF56808">
    <property type="entry name" value="Ribosomal protein L1"/>
    <property type="match status" value="1"/>
</dbReference>
<dbReference type="PROSITE" id="PS01199">
    <property type="entry name" value="RIBOSOMAL_L1"/>
    <property type="match status" value="1"/>
</dbReference>
<sequence>MQHSKNYRKAAAAIDRSKLYTPAEAVKLAKETTSVKFDATVEVAMRLGVDPRKADQMVRGTVNLPHGTGKTARVIVFAAGAKAEEAVAAGADEVGTDELVARIQGGWLDFDAAIATPDQMAKIGRIARILGPRGLMPNPKTGTVTMNVTKAVADIKGGKIAFRVDKHSNLHLIIGKASFSESQLVDNYAAVLDEILRAKPSAAKGKYLRKVTLTTTMGPGVPIDPNVVKNLRENSAEG</sequence>
<evidence type="ECO:0000255" key="1">
    <source>
        <dbReference type="HAMAP-Rule" id="MF_01318"/>
    </source>
</evidence>
<evidence type="ECO:0000305" key="2"/>
<organism>
    <name type="scientific">Salinispora tropica (strain ATCC BAA-916 / DSM 44818 / JCM 13857 / NBRC 105044 / CNB-440)</name>
    <dbReference type="NCBI Taxonomy" id="369723"/>
    <lineage>
        <taxon>Bacteria</taxon>
        <taxon>Bacillati</taxon>
        <taxon>Actinomycetota</taxon>
        <taxon>Actinomycetes</taxon>
        <taxon>Micromonosporales</taxon>
        <taxon>Micromonosporaceae</taxon>
        <taxon>Salinispora</taxon>
    </lineage>
</organism>
<proteinExistence type="inferred from homology"/>
<accession>A4XBQ9</accession>
<feature type="chain" id="PRO_1000086304" description="Large ribosomal subunit protein uL1">
    <location>
        <begin position="1"/>
        <end position="238"/>
    </location>
</feature>
<keyword id="KW-1185">Reference proteome</keyword>
<keyword id="KW-0678">Repressor</keyword>
<keyword id="KW-0687">Ribonucleoprotein</keyword>
<keyword id="KW-0689">Ribosomal protein</keyword>
<keyword id="KW-0694">RNA-binding</keyword>
<keyword id="KW-0699">rRNA-binding</keyword>
<keyword id="KW-0810">Translation regulation</keyword>
<keyword id="KW-0820">tRNA-binding</keyword>
<name>RL1_SALTO</name>
<protein>
    <recommendedName>
        <fullName evidence="1">Large ribosomal subunit protein uL1</fullName>
    </recommendedName>
    <alternativeName>
        <fullName evidence="2">50S ribosomal protein L1</fullName>
    </alternativeName>
</protein>